<feature type="chain" id="PRO_1000048564" description="DNA replication and repair protein RecF">
    <location>
        <begin position="1"/>
        <end position="410"/>
    </location>
</feature>
<feature type="binding site" evidence="1">
    <location>
        <begin position="30"/>
        <end position="37"/>
    </location>
    <ligand>
        <name>ATP</name>
        <dbReference type="ChEBI" id="CHEBI:30616"/>
    </ligand>
</feature>
<name>RECF_RHOJR</name>
<comment type="function">
    <text evidence="1">The RecF protein is involved in DNA metabolism; it is required for DNA replication and normal SOS inducibility. RecF binds preferentially to single-stranded, linear DNA. It also seems to bind ATP.</text>
</comment>
<comment type="subcellular location">
    <subcellularLocation>
        <location evidence="1">Cytoplasm</location>
    </subcellularLocation>
</comment>
<comment type="similarity">
    <text evidence="1">Belongs to the RecF family.</text>
</comment>
<protein>
    <recommendedName>
        <fullName evidence="1">DNA replication and repair protein RecF</fullName>
    </recommendedName>
</protein>
<proteinExistence type="inferred from homology"/>
<sequence>MFVRALSLRDFRSWDALGLTLRPGCTVFVGPNGHGKTNVLEALGYLSTLSSHRVSSDAPLIRTGTGQAFAGATVVNAGRELTVDLELNEGKSNRARINQSPTRRPREILGILQTVLFAPEDLSLVRGDPGDRRRYLDELLTSRIPRMAAVRADYDRVLRQRSALLKTAGGALRRVSRGSGRPSEDGASALATLEVWDGHLAAHGAQLLAGRLHLVHDLAPHLAESYQSLAPESRPASIRYRSSLGSSLPPEFTEPARVPEAGDIAFLEERFLQELSVMRSKEIERGVCLVGPHRDDLELHLGDTPAKGFASHGESWSFALSLRLAGFALLRSDGSDPVLMLDDVFAELDRRRRRALAKVALDAEQVLITAAVPEDVPEELDAVRFGVEARDTDRGRISHIVEEPEDRSDG</sequence>
<accession>Q0SAG4</accession>
<dbReference type="EMBL" id="CP000431">
    <property type="protein sequence ID" value="ABG95472.1"/>
    <property type="molecule type" value="Genomic_DNA"/>
</dbReference>
<dbReference type="RefSeq" id="WP_009476747.1">
    <property type="nucleotide sequence ID" value="NC_008268.1"/>
</dbReference>
<dbReference type="SMR" id="Q0SAG4"/>
<dbReference type="KEGG" id="rha:RHA1_ro03669"/>
<dbReference type="eggNOG" id="COG1195">
    <property type="taxonomic scope" value="Bacteria"/>
</dbReference>
<dbReference type="HOGENOM" id="CLU_040267_1_1_11"/>
<dbReference type="OrthoDB" id="9803889at2"/>
<dbReference type="Proteomes" id="UP000008710">
    <property type="component" value="Chromosome"/>
</dbReference>
<dbReference type="GO" id="GO:0005737">
    <property type="term" value="C:cytoplasm"/>
    <property type="evidence" value="ECO:0007669"/>
    <property type="project" value="UniProtKB-SubCell"/>
</dbReference>
<dbReference type="GO" id="GO:0005524">
    <property type="term" value="F:ATP binding"/>
    <property type="evidence" value="ECO:0007669"/>
    <property type="project" value="UniProtKB-UniRule"/>
</dbReference>
<dbReference type="GO" id="GO:0003697">
    <property type="term" value="F:single-stranded DNA binding"/>
    <property type="evidence" value="ECO:0007669"/>
    <property type="project" value="UniProtKB-UniRule"/>
</dbReference>
<dbReference type="GO" id="GO:0006260">
    <property type="term" value="P:DNA replication"/>
    <property type="evidence" value="ECO:0007669"/>
    <property type="project" value="UniProtKB-UniRule"/>
</dbReference>
<dbReference type="GO" id="GO:0000731">
    <property type="term" value="P:DNA synthesis involved in DNA repair"/>
    <property type="evidence" value="ECO:0007669"/>
    <property type="project" value="TreeGrafter"/>
</dbReference>
<dbReference type="GO" id="GO:0006302">
    <property type="term" value="P:double-strand break repair"/>
    <property type="evidence" value="ECO:0007669"/>
    <property type="project" value="TreeGrafter"/>
</dbReference>
<dbReference type="GO" id="GO:0009432">
    <property type="term" value="P:SOS response"/>
    <property type="evidence" value="ECO:0007669"/>
    <property type="project" value="UniProtKB-UniRule"/>
</dbReference>
<dbReference type="Gene3D" id="3.40.50.300">
    <property type="entry name" value="P-loop containing nucleotide triphosphate hydrolases"/>
    <property type="match status" value="1"/>
</dbReference>
<dbReference type="Gene3D" id="1.20.1050.90">
    <property type="entry name" value="RecF/RecN/SMC, N-terminal domain"/>
    <property type="match status" value="1"/>
</dbReference>
<dbReference type="HAMAP" id="MF_00365">
    <property type="entry name" value="RecF"/>
    <property type="match status" value="1"/>
</dbReference>
<dbReference type="InterPro" id="IPR001238">
    <property type="entry name" value="DNA-binding_RecF"/>
</dbReference>
<dbReference type="InterPro" id="IPR018078">
    <property type="entry name" value="DNA-binding_RecF_CS"/>
</dbReference>
<dbReference type="InterPro" id="IPR027417">
    <property type="entry name" value="P-loop_NTPase"/>
</dbReference>
<dbReference type="InterPro" id="IPR003395">
    <property type="entry name" value="RecF/RecN/SMC_N"/>
</dbReference>
<dbReference type="InterPro" id="IPR042174">
    <property type="entry name" value="RecF_2"/>
</dbReference>
<dbReference type="NCBIfam" id="TIGR00611">
    <property type="entry name" value="recf"/>
    <property type="match status" value="1"/>
</dbReference>
<dbReference type="PANTHER" id="PTHR32182">
    <property type="entry name" value="DNA REPLICATION AND REPAIR PROTEIN RECF"/>
    <property type="match status" value="1"/>
</dbReference>
<dbReference type="PANTHER" id="PTHR32182:SF0">
    <property type="entry name" value="DNA REPLICATION AND REPAIR PROTEIN RECF"/>
    <property type="match status" value="1"/>
</dbReference>
<dbReference type="Pfam" id="PF02463">
    <property type="entry name" value="SMC_N"/>
    <property type="match status" value="1"/>
</dbReference>
<dbReference type="SUPFAM" id="SSF52540">
    <property type="entry name" value="P-loop containing nucleoside triphosphate hydrolases"/>
    <property type="match status" value="1"/>
</dbReference>
<dbReference type="PROSITE" id="PS00617">
    <property type="entry name" value="RECF_1"/>
    <property type="match status" value="1"/>
</dbReference>
<dbReference type="PROSITE" id="PS00618">
    <property type="entry name" value="RECF_2"/>
    <property type="match status" value="1"/>
</dbReference>
<organism>
    <name type="scientific">Rhodococcus jostii (strain RHA1)</name>
    <dbReference type="NCBI Taxonomy" id="101510"/>
    <lineage>
        <taxon>Bacteria</taxon>
        <taxon>Bacillati</taxon>
        <taxon>Actinomycetota</taxon>
        <taxon>Actinomycetes</taxon>
        <taxon>Mycobacteriales</taxon>
        <taxon>Nocardiaceae</taxon>
        <taxon>Rhodococcus</taxon>
    </lineage>
</organism>
<keyword id="KW-0067">ATP-binding</keyword>
<keyword id="KW-0963">Cytoplasm</keyword>
<keyword id="KW-0227">DNA damage</keyword>
<keyword id="KW-0234">DNA repair</keyword>
<keyword id="KW-0235">DNA replication</keyword>
<keyword id="KW-0238">DNA-binding</keyword>
<keyword id="KW-0547">Nucleotide-binding</keyword>
<keyword id="KW-0742">SOS response</keyword>
<evidence type="ECO:0000255" key="1">
    <source>
        <dbReference type="HAMAP-Rule" id="MF_00365"/>
    </source>
</evidence>
<gene>
    <name evidence="1" type="primary">recF</name>
    <name type="ordered locus">RHA1_ro03669</name>
</gene>
<reference key="1">
    <citation type="journal article" date="2006" name="Proc. Natl. Acad. Sci. U.S.A.">
        <title>The complete genome of Rhodococcus sp. RHA1 provides insights into a catabolic powerhouse.</title>
        <authorList>
            <person name="McLeod M.P."/>
            <person name="Warren R.L."/>
            <person name="Hsiao W.W.L."/>
            <person name="Araki N."/>
            <person name="Myhre M."/>
            <person name="Fernandes C."/>
            <person name="Miyazawa D."/>
            <person name="Wong W."/>
            <person name="Lillquist A.L."/>
            <person name="Wang D."/>
            <person name="Dosanjh M."/>
            <person name="Hara H."/>
            <person name="Petrescu A."/>
            <person name="Morin R.D."/>
            <person name="Yang G."/>
            <person name="Stott J.M."/>
            <person name="Schein J.E."/>
            <person name="Shin H."/>
            <person name="Smailus D."/>
            <person name="Siddiqui A.S."/>
            <person name="Marra M.A."/>
            <person name="Jones S.J.M."/>
            <person name="Holt R."/>
            <person name="Brinkman F.S.L."/>
            <person name="Miyauchi K."/>
            <person name="Fukuda M."/>
            <person name="Davies J.E."/>
            <person name="Mohn W.W."/>
            <person name="Eltis L.D."/>
        </authorList>
    </citation>
    <scope>NUCLEOTIDE SEQUENCE [LARGE SCALE GENOMIC DNA]</scope>
    <source>
        <strain>RHA1</strain>
    </source>
</reference>